<reference key="1">
    <citation type="journal article" date="2009" name="PLoS Pathog.">
        <title>Molecular evolutionary consequences of niche restriction in Francisella tularensis, a facultative intracellular pathogen.</title>
        <authorList>
            <person name="Larsson P."/>
            <person name="Elfsmark D."/>
            <person name="Svensson K."/>
            <person name="Wikstroem P."/>
            <person name="Forsman M."/>
            <person name="Brettin T."/>
            <person name="Keim P."/>
            <person name="Johansson A."/>
        </authorList>
    </citation>
    <scope>NUCLEOTIDE SEQUENCE [LARGE SCALE GENOMIC DNA]</scope>
    <source>
        <strain>FSC147</strain>
    </source>
</reference>
<accession>B2SFB5</accession>
<comment type="function">
    <text evidence="1">Catalyzes the last two sequential reactions in the de novo biosynthetic pathway for UDP-N-acetylglucosamine (UDP-GlcNAc). The C-terminal domain catalyzes the transfer of acetyl group from acetyl coenzyme A to glucosamine-1-phosphate (GlcN-1-P) to produce N-acetylglucosamine-1-phosphate (GlcNAc-1-P), which is converted into UDP-GlcNAc by the transfer of uridine 5-monophosphate (from uridine 5-triphosphate), a reaction catalyzed by the N-terminal domain.</text>
</comment>
<comment type="catalytic activity">
    <reaction evidence="1">
        <text>alpha-D-glucosamine 1-phosphate + acetyl-CoA = N-acetyl-alpha-D-glucosamine 1-phosphate + CoA + H(+)</text>
        <dbReference type="Rhea" id="RHEA:13725"/>
        <dbReference type="ChEBI" id="CHEBI:15378"/>
        <dbReference type="ChEBI" id="CHEBI:57287"/>
        <dbReference type="ChEBI" id="CHEBI:57288"/>
        <dbReference type="ChEBI" id="CHEBI:57776"/>
        <dbReference type="ChEBI" id="CHEBI:58516"/>
        <dbReference type="EC" id="2.3.1.157"/>
    </reaction>
</comment>
<comment type="catalytic activity">
    <reaction evidence="1">
        <text>N-acetyl-alpha-D-glucosamine 1-phosphate + UTP + H(+) = UDP-N-acetyl-alpha-D-glucosamine + diphosphate</text>
        <dbReference type="Rhea" id="RHEA:13509"/>
        <dbReference type="ChEBI" id="CHEBI:15378"/>
        <dbReference type="ChEBI" id="CHEBI:33019"/>
        <dbReference type="ChEBI" id="CHEBI:46398"/>
        <dbReference type="ChEBI" id="CHEBI:57705"/>
        <dbReference type="ChEBI" id="CHEBI:57776"/>
        <dbReference type="EC" id="2.7.7.23"/>
    </reaction>
</comment>
<comment type="cofactor">
    <cofactor evidence="1">
        <name>Mg(2+)</name>
        <dbReference type="ChEBI" id="CHEBI:18420"/>
    </cofactor>
    <text evidence="1">Binds 1 Mg(2+) ion per subunit.</text>
</comment>
<comment type="pathway">
    <text evidence="1">Nucleotide-sugar biosynthesis; UDP-N-acetyl-alpha-D-glucosamine biosynthesis; N-acetyl-alpha-D-glucosamine 1-phosphate from alpha-D-glucosamine 6-phosphate (route II): step 2/2.</text>
</comment>
<comment type="pathway">
    <text evidence="1">Nucleotide-sugar biosynthesis; UDP-N-acetyl-alpha-D-glucosamine biosynthesis; UDP-N-acetyl-alpha-D-glucosamine from N-acetyl-alpha-D-glucosamine 1-phosphate: step 1/1.</text>
</comment>
<comment type="pathway">
    <text evidence="1">Bacterial outer membrane biogenesis; LPS lipid A biosynthesis.</text>
</comment>
<comment type="subunit">
    <text evidence="1">Homotrimer.</text>
</comment>
<comment type="subcellular location">
    <subcellularLocation>
        <location evidence="1">Cytoplasm</location>
    </subcellularLocation>
</comment>
<comment type="similarity">
    <text evidence="1">In the N-terminal section; belongs to the N-acetylglucosamine-1-phosphate uridyltransferase family.</text>
</comment>
<comment type="similarity">
    <text evidence="1">In the C-terminal section; belongs to the transferase hexapeptide repeat family.</text>
</comment>
<proteinExistence type="inferred from homology"/>
<dbReference type="EC" id="2.7.7.23" evidence="1"/>
<dbReference type="EC" id="2.3.1.157" evidence="1"/>
<dbReference type="EMBL" id="CP000915">
    <property type="protein sequence ID" value="ACD30547.1"/>
    <property type="molecule type" value="Genomic_DNA"/>
</dbReference>
<dbReference type="SMR" id="B2SFB5"/>
<dbReference type="KEGG" id="ftm:FTM_0542"/>
<dbReference type="HOGENOM" id="CLU_029499_15_2_6"/>
<dbReference type="UniPathway" id="UPA00113">
    <property type="reaction ID" value="UER00532"/>
</dbReference>
<dbReference type="UniPathway" id="UPA00113">
    <property type="reaction ID" value="UER00533"/>
</dbReference>
<dbReference type="UniPathway" id="UPA00973"/>
<dbReference type="GO" id="GO:0005737">
    <property type="term" value="C:cytoplasm"/>
    <property type="evidence" value="ECO:0007669"/>
    <property type="project" value="UniProtKB-SubCell"/>
</dbReference>
<dbReference type="GO" id="GO:0016020">
    <property type="term" value="C:membrane"/>
    <property type="evidence" value="ECO:0007669"/>
    <property type="project" value="GOC"/>
</dbReference>
<dbReference type="GO" id="GO:0019134">
    <property type="term" value="F:glucosamine-1-phosphate N-acetyltransferase activity"/>
    <property type="evidence" value="ECO:0007669"/>
    <property type="project" value="UniProtKB-UniRule"/>
</dbReference>
<dbReference type="GO" id="GO:0000287">
    <property type="term" value="F:magnesium ion binding"/>
    <property type="evidence" value="ECO:0007669"/>
    <property type="project" value="UniProtKB-UniRule"/>
</dbReference>
<dbReference type="GO" id="GO:0003977">
    <property type="term" value="F:UDP-N-acetylglucosamine diphosphorylase activity"/>
    <property type="evidence" value="ECO:0007669"/>
    <property type="project" value="UniProtKB-UniRule"/>
</dbReference>
<dbReference type="GO" id="GO:0000902">
    <property type="term" value="P:cell morphogenesis"/>
    <property type="evidence" value="ECO:0007669"/>
    <property type="project" value="UniProtKB-UniRule"/>
</dbReference>
<dbReference type="GO" id="GO:0071555">
    <property type="term" value="P:cell wall organization"/>
    <property type="evidence" value="ECO:0007669"/>
    <property type="project" value="UniProtKB-KW"/>
</dbReference>
<dbReference type="GO" id="GO:0009245">
    <property type="term" value="P:lipid A biosynthetic process"/>
    <property type="evidence" value="ECO:0007669"/>
    <property type="project" value="UniProtKB-UniRule"/>
</dbReference>
<dbReference type="GO" id="GO:0009252">
    <property type="term" value="P:peptidoglycan biosynthetic process"/>
    <property type="evidence" value="ECO:0007669"/>
    <property type="project" value="UniProtKB-UniRule"/>
</dbReference>
<dbReference type="GO" id="GO:0008360">
    <property type="term" value="P:regulation of cell shape"/>
    <property type="evidence" value="ECO:0007669"/>
    <property type="project" value="UniProtKB-KW"/>
</dbReference>
<dbReference type="GO" id="GO:0006048">
    <property type="term" value="P:UDP-N-acetylglucosamine biosynthetic process"/>
    <property type="evidence" value="ECO:0007669"/>
    <property type="project" value="UniProtKB-UniPathway"/>
</dbReference>
<dbReference type="CDD" id="cd02540">
    <property type="entry name" value="GT2_GlmU_N_bac"/>
    <property type="match status" value="1"/>
</dbReference>
<dbReference type="CDD" id="cd03353">
    <property type="entry name" value="LbH_GlmU_C"/>
    <property type="match status" value="1"/>
</dbReference>
<dbReference type="Gene3D" id="2.160.10.10">
    <property type="entry name" value="Hexapeptide repeat proteins"/>
    <property type="match status" value="1"/>
</dbReference>
<dbReference type="Gene3D" id="3.90.550.10">
    <property type="entry name" value="Spore Coat Polysaccharide Biosynthesis Protein SpsA, Chain A"/>
    <property type="match status" value="1"/>
</dbReference>
<dbReference type="HAMAP" id="MF_01631">
    <property type="entry name" value="GlmU"/>
    <property type="match status" value="1"/>
</dbReference>
<dbReference type="InterPro" id="IPR005882">
    <property type="entry name" value="Bifunctional_GlmU"/>
</dbReference>
<dbReference type="InterPro" id="IPR050065">
    <property type="entry name" value="GlmU-like"/>
</dbReference>
<dbReference type="InterPro" id="IPR038009">
    <property type="entry name" value="GlmU_C_LbH"/>
</dbReference>
<dbReference type="InterPro" id="IPR001451">
    <property type="entry name" value="Hexapep"/>
</dbReference>
<dbReference type="InterPro" id="IPR018357">
    <property type="entry name" value="Hexapep_transf_CS"/>
</dbReference>
<dbReference type="InterPro" id="IPR025877">
    <property type="entry name" value="MobA-like_NTP_Trfase"/>
</dbReference>
<dbReference type="InterPro" id="IPR029044">
    <property type="entry name" value="Nucleotide-diphossugar_trans"/>
</dbReference>
<dbReference type="InterPro" id="IPR011004">
    <property type="entry name" value="Trimer_LpxA-like_sf"/>
</dbReference>
<dbReference type="NCBIfam" id="TIGR01173">
    <property type="entry name" value="glmU"/>
    <property type="match status" value="1"/>
</dbReference>
<dbReference type="PANTHER" id="PTHR43584:SF3">
    <property type="entry name" value="BIFUNCTIONAL PROTEIN GLMU"/>
    <property type="match status" value="1"/>
</dbReference>
<dbReference type="PANTHER" id="PTHR43584">
    <property type="entry name" value="NUCLEOTIDYL TRANSFERASE"/>
    <property type="match status" value="1"/>
</dbReference>
<dbReference type="Pfam" id="PF00132">
    <property type="entry name" value="Hexapep"/>
    <property type="match status" value="2"/>
</dbReference>
<dbReference type="Pfam" id="PF12804">
    <property type="entry name" value="NTP_transf_3"/>
    <property type="match status" value="1"/>
</dbReference>
<dbReference type="SUPFAM" id="SSF53448">
    <property type="entry name" value="Nucleotide-diphospho-sugar transferases"/>
    <property type="match status" value="1"/>
</dbReference>
<dbReference type="SUPFAM" id="SSF51161">
    <property type="entry name" value="Trimeric LpxA-like enzymes"/>
    <property type="match status" value="1"/>
</dbReference>
<dbReference type="PROSITE" id="PS00101">
    <property type="entry name" value="HEXAPEP_TRANSFERASES"/>
    <property type="match status" value="1"/>
</dbReference>
<sequence length="455" mass="49656">MGLSVVILAAGKGSRMNSNKPKVLQTLAAKTLIEHVVSSVEKLNPDNIVVVTGHLKEQVEDALQGRNITFVYQQQQLGTGHAVLQALPYLKEQKVLILYGDVPLISTEVLENLVDTTNDDDLGVLTAFVENPQGLGRIVRDKFGAVTEIVEEKDANDIQRQIKEINTGIYCVHKNLLQKWLPEIKANNVQKEYYLTDIITFAKADHVSINVTHPINEFEILGVNDRTQLASLERVWQRNVAEKIMAKGVSIADPNRFDVRGNLDVGKDCWIDINVIIKGNVKLGNNVVIGANCILKNCIIEDNVRIKSNSMVDGSIIREGAIVGPFARVRPECDVKEGAVIGNFVEAKKTILGKGSKASHLTYLGDSEIGANCNIGAGVITCNYDGVNKHKTVIGDYAFIGSDSQLIAPVNIGQGATVGAGSTIVKDVPADNLAISRARQRHIDTWQRSVKKTDK</sequence>
<name>GLMU_FRATM</name>
<gene>
    <name evidence="1" type="primary">glmU</name>
    <name type="ordered locus">FTM_0542</name>
</gene>
<evidence type="ECO:0000255" key="1">
    <source>
        <dbReference type="HAMAP-Rule" id="MF_01631"/>
    </source>
</evidence>
<feature type="chain" id="PRO_1000186455" description="Bifunctional protein GlmU">
    <location>
        <begin position="1"/>
        <end position="455"/>
    </location>
</feature>
<feature type="region of interest" description="Pyrophosphorylase" evidence="1">
    <location>
        <begin position="1"/>
        <end position="226"/>
    </location>
</feature>
<feature type="region of interest" description="Linker" evidence="1">
    <location>
        <begin position="227"/>
        <end position="247"/>
    </location>
</feature>
<feature type="region of interest" description="N-acetyltransferase" evidence="1">
    <location>
        <begin position="248"/>
        <end position="455"/>
    </location>
</feature>
<feature type="active site" description="Proton acceptor" evidence="1">
    <location>
        <position position="360"/>
    </location>
</feature>
<feature type="binding site" evidence="1">
    <location>
        <begin position="8"/>
        <end position="11"/>
    </location>
    <ligand>
        <name>UDP-N-acetyl-alpha-D-glucosamine</name>
        <dbReference type="ChEBI" id="CHEBI:57705"/>
    </ligand>
</feature>
<feature type="binding site" evidence="1">
    <location>
        <position position="22"/>
    </location>
    <ligand>
        <name>UDP-N-acetyl-alpha-D-glucosamine</name>
        <dbReference type="ChEBI" id="CHEBI:57705"/>
    </ligand>
</feature>
<feature type="binding site" evidence="1">
    <location>
        <position position="73"/>
    </location>
    <ligand>
        <name>UDP-N-acetyl-alpha-D-glucosamine</name>
        <dbReference type="ChEBI" id="CHEBI:57705"/>
    </ligand>
</feature>
<feature type="binding site" evidence="1">
    <location>
        <begin position="78"/>
        <end position="79"/>
    </location>
    <ligand>
        <name>UDP-N-acetyl-alpha-D-glucosamine</name>
        <dbReference type="ChEBI" id="CHEBI:57705"/>
    </ligand>
</feature>
<feature type="binding site" evidence="1">
    <location>
        <begin position="99"/>
        <end position="101"/>
    </location>
    <ligand>
        <name>UDP-N-acetyl-alpha-D-glucosamine</name>
        <dbReference type="ChEBI" id="CHEBI:57705"/>
    </ligand>
</feature>
<feature type="binding site" evidence="1">
    <location>
        <position position="101"/>
    </location>
    <ligand>
        <name>Mg(2+)</name>
        <dbReference type="ChEBI" id="CHEBI:18420"/>
    </ligand>
</feature>
<feature type="binding site" evidence="1">
    <location>
        <position position="136"/>
    </location>
    <ligand>
        <name>UDP-N-acetyl-alpha-D-glucosamine</name>
        <dbReference type="ChEBI" id="CHEBI:57705"/>
    </ligand>
</feature>
<feature type="binding site" evidence="1">
    <location>
        <position position="151"/>
    </location>
    <ligand>
        <name>UDP-N-acetyl-alpha-D-glucosamine</name>
        <dbReference type="ChEBI" id="CHEBI:57705"/>
    </ligand>
</feature>
<feature type="binding site" evidence="1">
    <location>
        <position position="166"/>
    </location>
    <ligand>
        <name>UDP-N-acetyl-alpha-D-glucosamine</name>
        <dbReference type="ChEBI" id="CHEBI:57705"/>
    </ligand>
</feature>
<feature type="binding site" evidence="1">
    <location>
        <position position="224"/>
    </location>
    <ligand>
        <name>Mg(2+)</name>
        <dbReference type="ChEBI" id="CHEBI:18420"/>
    </ligand>
</feature>
<feature type="binding site" evidence="1">
    <location>
        <position position="224"/>
    </location>
    <ligand>
        <name>UDP-N-acetyl-alpha-D-glucosamine</name>
        <dbReference type="ChEBI" id="CHEBI:57705"/>
    </ligand>
</feature>
<feature type="binding site" evidence="1">
    <location>
        <position position="330"/>
    </location>
    <ligand>
        <name>UDP-N-acetyl-alpha-D-glucosamine</name>
        <dbReference type="ChEBI" id="CHEBI:57705"/>
    </ligand>
</feature>
<feature type="binding site" evidence="1">
    <location>
        <position position="348"/>
    </location>
    <ligand>
        <name>UDP-N-acetyl-alpha-D-glucosamine</name>
        <dbReference type="ChEBI" id="CHEBI:57705"/>
    </ligand>
</feature>
<feature type="binding site" evidence="1">
    <location>
        <position position="363"/>
    </location>
    <ligand>
        <name>UDP-N-acetyl-alpha-D-glucosamine</name>
        <dbReference type="ChEBI" id="CHEBI:57705"/>
    </ligand>
</feature>
<feature type="binding site" evidence="1">
    <location>
        <position position="374"/>
    </location>
    <ligand>
        <name>UDP-N-acetyl-alpha-D-glucosamine</name>
        <dbReference type="ChEBI" id="CHEBI:57705"/>
    </ligand>
</feature>
<feature type="binding site" evidence="1">
    <location>
        <position position="377"/>
    </location>
    <ligand>
        <name>acetyl-CoA</name>
        <dbReference type="ChEBI" id="CHEBI:57288"/>
    </ligand>
</feature>
<feature type="binding site" evidence="1">
    <location>
        <begin position="383"/>
        <end position="384"/>
    </location>
    <ligand>
        <name>acetyl-CoA</name>
        <dbReference type="ChEBI" id="CHEBI:57288"/>
    </ligand>
</feature>
<feature type="binding site" evidence="1">
    <location>
        <position position="402"/>
    </location>
    <ligand>
        <name>acetyl-CoA</name>
        <dbReference type="ChEBI" id="CHEBI:57288"/>
    </ligand>
</feature>
<feature type="binding site" evidence="1">
    <location>
        <position position="420"/>
    </location>
    <ligand>
        <name>acetyl-CoA</name>
        <dbReference type="ChEBI" id="CHEBI:57288"/>
    </ligand>
</feature>
<feature type="binding site" evidence="1">
    <location>
        <position position="437"/>
    </location>
    <ligand>
        <name>acetyl-CoA</name>
        <dbReference type="ChEBI" id="CHEBI:57288"/>
    </ligand>
</feature>
<protein>
    <recommendedName>
        <fullName evidence="1">Bifunctional protein GlmU</fullName>
    </recommendedName>
    <domain>
        <recommendedName>
            <fullName evidence="1">UDP-N-acetylglucosamine pyrophosphorylase</fullName>
            <ecNumber evidence="1">2.7.7.23</ecNumber>
        </recommendedName>
        <alternativeName>
            <fullName evidence="1">N-acetylglucosamine-1-phosphate uridyltransferase</fullName>
        </alternativeName>
    </domain>
    <domain>
        <recommendedName>
            <fullName evidence="1">Glucosamine-1-phosphate N-acetyltransferase</fullName>
            <ecNumber evidence="1">2.3.1.157</ecNumber>
        </recommendedName>
    </domain>
</protein>
<organism>
    <name type="scientific">Francisella tularensis subsp. mediasiatica (strain FSC147)</name>
    <dbReference type="NCBI Taxonomy" id="441952"/>
    <lineage>
        <taxon>Bacteria</taxon>
        <taxon>Pseudomonadati</taxon>
        <taxon>Pseudomonadota</taxon>
        <taxon>Gammaproteobacteria</taxon>
        <taxon>Thiotrichales</taxon>
        <taxon>Francisellaceae</taxon>
        <taxon>Francisella</taxon>
    </lineage>
</organism>
<keyword id="KW-0012">Acyltransferase</keyword>
<keyword id="KW-0133">Cell shape</keyword>
<keyword id="KW-0961">Cell wall biogenesis/degradation</keyword>
<keyword id="KW-0963">Cytoplasm</keyword>
<keyword id="KW-0460">Magnesium</keyword>
<keyword id="KW-0479">Metal-binding</keyword>
<keyword id="KW-0511">Multifunctional enzyme</keyword>
<keyword id="KW-0548">Nucleotidyltransferase</keyword>
<keyword id="KW-0573">Peptidoglycan synthesis</keyword>
<keyword id="KW-0677">Repeat</keyword>
<keyword id="KW-0808">Transferase</keyword>